<reference key="1">
    <citation type="journal article" date="2003" name="Nature">
        <title>Genome sequence of Bacillus cereus and comparative analysis with Bacillus anthracis.</title>
        <authorList>
            <person name="Ivanova N."/>
            <person name="Sorokin A."/>
            <person name="Anderson I."/>
            <person name="Galleron N."/>
            <person name="Candelon B."/>
            <person name="Kapatral V."/>
            <person name="Bhattacharyya A."/>
            <person name="Reznik G."/>
            <person name="Mikhailova N."/>
            <person name="Lapidus A."/>
            <person name="Chu L."/>
            <person name="Mazur M."/>
            <person name="Goltsman E."/>
            <person name="Larsen N."/>
            <person name="D'Souza M."/>
            <person name="Walunas T."/>
            <person name="Grechkin Y."/>
            <person name="Pusch G."/>
            <person name="Haselkorn R."/>
            <person name="Fonstein M."/>
            <person name="Ehrlich S.D."/>
            <person name="Overbeek R."/>
            <person name="Kyrpides N.C."/>
        </authorList>
    </citation>
    <scope>NUCLEOTIDE SEQUENCE [LARGE SCALE GENOMIC DNA]</scope>
    <source>
        <strain>ATCC 14579 / DSM 31 / CCUG 7414 / JCM 2152 / NBRC 15305 / NCIMB 9373 / NCTC 2599 / NRRL B-3711</strain>
    </source>
</reference>
<evidence type="ECO:0000255" key="1">
    <source>
        <dbReference type="HAMAP-Rule" id="MF_01726"/>
    </source>
</evidence>
<comment type="function">
    <text evidence="1">Part of the ABC transporter complex PotABCD involved in spermidine/putrescine import. Responsible for energy coupling to the transport system.</text>
</comment>
<comment type="catalytic activity">
    <reaction evidence="1">
        <text>ATP + H2O + polyamine-[polyamine-binding protein]Side 1 = ADP + phosphate + polyamineSide 2 + [polyamine-binding protein]Side 1.</text>
        <dbReference type="EC" id="7.6.2.11"/>
    </reaction>
</comment>
<comment type="subunit">
    <text evidence="1">The complex is composed of two ATP-binding proteins (PotA), two transmembrane proteins (PotB and PotC) and a solute-binding protein (PotD).</text>
</comment>
<comment type="subcellular location">
    <subcellularLocation>
        <location evidence="1">Cell membrane</location>
        <topology evidence="1">Peripheral membrane protein</topology>
    </subcellularLocation>
</comment>
<comment type="similarity">
    <text evidence="1">Belongs to the ABC transporter superfamily. Spermidine/putrescine importer (TC 3.A.1.11.1) family.</text>
</comment>
<dbReference type="EC" id="7.6.2.11" evidence="1"/>
<dbReference type="EMBL" id="AE016877">
    <property type="protein sequence ID" value="AAP08269.1"/>
    <property type="molecule type" value="Genomic_DNA"/>
</dbReference>
<dbReference type="RefSeq" id="NP_831068.1">
    <property type="nucleotide sequence ID" value="NC_004722.1"/>
</dbReference>
<dbReference type="RefSeq" id="WP_000720333.1">
    <property type="nucleotide sequence ID" value="NZ_CP138336.1"/>
</dbReference>
<dbReference type="SMR" id="Q81GC1"/>
<dbReference type="STRING" id="226900.BC_1286"/>
<dbReference type="GeneID" id="72448060"/>
<dbReference type="KEGG" id="bce:BC1286"/>
<dbReference type="PATRIC" id="fig|226900.8.peg.1259"/>
<dbReference type="HOGENOM" id="CLU_000604_1_1_9"/>
<dbReference type="OrthoDB" id="9790614at2"/>
<dbReference type="Proteomes" id="UP000001417">
    <property type="component" value="Chromosome"/>
</dbReference>
<dbReference type="GO" id="GO:0043190">
    <property type="term" value="C:ATP-binding cassette (ABC) transporter complex"/>
    <property type="evidence" value="ECO:0007669"/>
    <property type="project" value="InterPro"/>
</dbReference>
<dbReference type="GO" id="GO:0015594">
    <property type="term" value="F:ABC-type putrescine transporter activity"/>
    <property type="evidence" value="ECO:0007669"/>
    <property type="project" value="InterPro"/>
</dbReference>
<dbReference type="GO" id="GO:0005524">
    <property type="term" value="F:ATP binding"/>
    <property type="evidence" value="ECO:0007669"/>
    <property type="project" value="UniProtKB-KW"/>
</dbReference>
<dbReference type="GO" id="GO:0016887">
    <property type="term" value="F:ATP hydrolysis activity"/>
    <property type="evidence" value="ECO:0007669"/>
    <property type="project" value="InterPro"/>
</dbReference>
<dbReference type="CDD" id="cd03300">
    <property type="entry name" value="ABC_PotA_N"/>
    <property type="match status" value="1"/>
</dbReference>
<dbReference type="FunFam" id="3.40.50.300:FF:000133">
    <property type="entry name" value="Spermidine/putrescine import ATP-binding protein PotA"/>
    <property type="match status" value="1"/>
</dbReference>
<dbReference type="Gene3D" id="3.40.50.300">
    <property type="entry name" value="P-loop containing nucleotide triphosphate hydrolases"/>
    <property type="match status" value="1"/>
</dbReference>
<dbReference type="InterPro" id="IPR003593">
    <property type="entry name" value="AAA+_ATPase"/>
</dbReference>
<dbReference type="InterPro" id="IPR050093">
    <property type="entry name" value="ABC_SmlMolc_Importer"/>
</dbReference>
<dbReference type="InterPro" id="IPR003439">
    <property type="entry name" value="ABC_transporter-like_ATP-bd"/>
</dbReference>
<dbReference type="InterPro" id="IPR017871">
    <property type="entry name" value="ABC_transporter-like_CS"/>
</dbReference>
<dbReference type="InterPro" id="IPR008995">
    <property type="entry name" value="Mo/tungstate-bd_C_term_dom"/>
</dbReference>
<dbReference type="InterPro" id="IPR027417">
    <property type="entry name" value="P-loop_NTPase"/>
</dbReference>
<dbReference type="InterPro" id="IPR017879">
    <property type="entry name" value="PotA_ATP-bd"/>
</dbReference>
<dbReference type="InterPro" id="IPR013611">
    <property type="entry name" value="Transp-assoc_OB_typ2"/>
</dbReference>
<dbReference type="PANTHER" id="PTHR42781">
    <property type="entry name" value="SPERMIDINE/PUTRESCINE IMPORT ATP-BINDING PROTEIN POTA"/>
    <property type="match status" value="1"/>
</dbReference>
<dbReference type="PANTHER" id="PTHR42781:SF4">
    <property type="entry name" value="SPERMIDINE_PUTRESCINE IMPORT ATP-BINDING PROTEIN POTA"/>
    <property type="match status" value="1"/>
</dbReference>
<dbReference type="Pfam" id="PF00005">
    <property type="entry name" value="ABC_tran"/>
    <property type="match status" value="1"/>
</dbReference>
<dbReference type="Pfam" id="PF08402">
    <property type="entry name" value="TOBE_2"/>
    <property type="match status" value="1"/>
</dbReference>
<dbReference type="SMART" id="SM00382">
    <property type="entry name" value="AAA"/>
    <property type="match status" value="1"/>
</dbReference>
<dbReference type="SUPFAM" id="SSF50331">
    <property type="entry name" value="MOP-like"/>
    <property type="match status" value="1"/>
</dbReference>
<dbReference type="SUPFAM" id="SSF52540">
    <property type="entry name" value="P-loop containing nucleoside triphosphate hydrolases"/>
    <property type="match status" value="1"/>
</dbReference>
<dbReference type="PROSITE" id="PS00211">
    <property type="entry name" value="ABC_TRANSPORTER_1"/>
    <property type="match status" value="1"/>
</dbReference>
<dbReference type="PROSITE" id="PS50893">
    <property type="entry name" value="ABC_TRANSPORTER_2"/>
    <property type="match status" value="1"/>
</dbReference>
<dbReference type="PROSITE" id="PS51305">
    <property type="entry name" value="POTA"/>
    <property type="match status" value="1"/>
</dbReference>
<gene>
    <name evidence="1" type="primary">potA</name>
    <name type="ordered locus">BC_1286</name>
</gene>
<protein>
    <recommendedName>
        <fullName evidence="1">Spermidine/putrescine import ATP-binding protein PotA</fullName>
        <ecNumber evidence="1">7.6.2.11</ecNumber>
    </recommendedName>
</protein>
<name>POTA_BACCR</name>
<proteinExistence type="inferred from homology"/>
<feature type="chain" id="PRO_0000286193" description="Spermidine/putrescine import ATP-binding protein PotA">
    <location>
        <begin position="1"/>
        <end position="327"/>
    </location>
</feature>
<feature type="domain" description="ABC transporter" evidence="1">
    <location>
        <begin position="5"/>
        <end position="235"/>
    </location>
</feature>
<feature type="binding site" evidence="1">
    <location>
        <begin position="37"/>
        <end position="44"/>
    </location>
    <ligand>
        <name>ATP</name>
        <dbReference type="ChEBI" id="CHEBI:30616"/>
    </ligand>
</feature>
<keyword id="KW-0067">ATP-binding</keyword>
<keyword id="KW-1003">Cell membrane</keyword>
<keyword id="KW-0472">Membrane</keyword>
<keyword id="KW-0547">Nucleotide-binding</keyword>
<keyword id="KW-1185">Reference proteome</keyword>
<keyword id="KW-1278">Translocase</keyword>
<keyword id="KW-0813">Transport</keyword>
<organism>
    <name type="scientific">Bacillus cereus (strain ATCC 14579 / DSM 31 / CCUG 7414 / JCM 2152 / NBRC 15305 / NCIMB 9373 / NCTC 2599 / NRRL B-3711)</name>
    <dbReference type="NCBI Taxonomy" id="226900"/>
    <lineage>
        <taxon>Bacteria</taxon>
        <taxon>Bacillati</taxon>
        <taxon>Bacillota</taxon>
        <taxon>Bacilli</taxon>
        <taxon>Bacillales</taxon>
        <taxon>Bacillaceae</taxon>
        <taxon>Bacillus</taxon>
        <taxon>Bacillus cereus group</taxon>
    </lineage>
</organism>
<accession>Q81GC1</accession>
<sequence>MKKIIKVEAVEKHFGNQVIIPPLSLDIKEGEFLTILGPSGCGKTTLLRMIAGFETPTKGNLLLDDERINDLPPYKRHMNLVFQHYALFPHMTVEKNICFGMKMQKVSAAEQKERAEEAMRLTQLLEFRNRKPAKLSGGQQQRVAIARAIVNNPRVLLLDEPLGALDFKLRKDLQRELKNLQRNLGITFIYVTHDQEEAMSMSDRIVVMNKGHIEQIGTPKEIYNKPKTLFVATFIGENNIVKNGEGYVAIRPENVKVRSVEEPILKEYHLGHIEDIEFVGNMEKLYVRDEKTSELLMAYQTAEEAAQWSIGDNVYVGWEQEDEVTLN</sequence>